<comment type="subcellular location">
    <subcellularLocation>
        <location>Vacuole</location>
    </subcellularLocation>
    <text evidence="5">Lysosome-like vacuoles.</text>
</comment>
<comment type="similarity">
    <text evidence="5">Belongs to the peptidase A1 family.</text>
</comment>
<organism>
    <name type="scientific">Candida albicans</name>
    <name type="common">Yeast</name>
    <dbReference type="NCBI Taxonomy" id="5476"/>
    <lineage>
        <taxon>Eukaryota</taxon>
        <taxon>Fungi</taxon>
        <taxon>Dikarya</taxon>
        <taxon>Ascomycota</taxon>
        <taxon>Saccharomycotina</taxon>
        <taxon>Pichiomycetes</taxon>
        <taxon>Debaryomycetaceae</taxon>
        <taxon>Candida/Lodderomyces clade</taxon>
        <taxon>Candida</taxon>
    </lineage>
</organism>
<feature type="signal peptide" evidence="2">
    <location>
        <begin position="1"/>
        <end position="22"/>
    </location>
</feature>
<feature type="chain" id="PRO_0000025866" description="Vacuolar aspartic protease">
    <location>
        <begin position="23"/>
        <end position="419"/>
    </location>
</feature>
<feature type="domain" description="Peptidase A1" evidence="3">
    <location>
        <begin position="104"/>
        <end position="415"/>
    </location>
</feature>
<feature type="short sequence motif" description="Microbody targeting signal" evidence="2">
    <location>
        <begin position="417"/>
        <end position="419"/>
    </location>
</feature>
<feature type="active site" evidence="4">
    <location>
        <position position="122"/>
    </location>
</feature>
<feature type="active site" evidence="4">
    <location>
        <position position="307"/>
    </location>
</feature>
<feature type="glycosylation site" description="N-linked (GlcNAc...) asparagine" evidence="2">
    <location>
        <position position="157"/>
    </location>
</feature>
<feature type="glycosylation site" description="N-linked (GlcNAc...) asparagine" evidence="2">
    <location>
        <position position="358"/>
    </location>
</feature>
<feature type="disulfide bond" evidence="1">
    <location>
        <begin position="135"/>
        <end position="140"/>
    </location>
</feature>
<feature type="disulfide bond" evidence="1">
    <location>
        <begin position="341"/>
        <end position="374"/>
    </location>
</feature>
<feature type="sequence conflict" description="In Ref. 2; CAA31962." evidence="5" ref="2">
    <original>DA</original>
    <variation>MH</variation>
    <location>
        <begin position="39"/>
        <end position="40"/>
    </location>
</feature>
<feature type="sequence conflict" description="In Ref. 2; CAA31962." evidence="5" ref="2">
    <original>K</original>
    <variation>E</variation>
    <location>
        <position position="88"/>
    </location>
</feature>
<feature type="sequence conflict" description="In Ref. 2; CAA31962." evidence="5" ref="2">
    <original>Q</original>
    <variation>E</variation>
    <location>
        <position position="109"/>
    </location>
</feature>
<feature type="sequence conflict" description="In Ref. 2; CAA31962." evidence="5" ref="2">
    <original>V</original>
    <variation>A</variation>
    <location>
        <position position="156"/>
    </location>
</feature>
<feature type="sequence conflict" description="In Ref. 2; CAA31962." evidence="5" ref="2">
    <original>IS</original>
    <variation>HI</variation>
    <location>
        <begin position="174"/>
        <end position="175"/>
    </location>
</feature>
<feature type="sequence conflict" description="In Ref. 2; CAA31962." evidence="5" ref="2">
    <original>G</original>
    <variation>A</variation>
    <location>
        <position position="234"/>
    </location>
</feature>
<feature type="sequence conflict" description="In Ref. 2; CAA31962." evidence="5" ref="2">
    <original>A</original>
    <variation>D</variation>
    <location>
        <position position="281"/>
    </location>
</feature>
<feature type="sequence conflict" description="In Ref. 2; CAA31962." evidence="5" ref="2">
    <original>IL</original>
    <variation>Y</variation>
    <location>
        <begin position="367"/>
        <end position="368"/>
    </location>
</feature>
<feature type="sequence conflict" description="In Ref. 2; CAA31962." evidence="5" ref="2">
    <original>T</original>
    <variation>S</variation>
    <location>
        <position position="417"/>
    </location>
</feature>
<keyword id="KW-0064">Aspartyl protease</keyword>
<keyword id="KW-1015">Disulfide bond</keyword>
<keyword id="KW-0325">Glycoprotein</keyword>
<keyword id="KW-0378">Hydrolase</keyword>
<keyword id="KW-0645">Protease</keyword>
<keyword id="KW-0732">Signal</keyword>
<keyword id="KW-0926">Vacuole</keyword>
<accession>P10977</accession>
<name>CARPV_CANAX</name>
<proteinExistence type="inferred from homology"/>
<reference key="1">
    <citation type="journal article" date="1997" name="FEMS Microbiol. Lett.">
        <title>Temperature-related expression of the vacuolar aspartic proteinase (APR1) gene and beta-N-acetylglucosaminidase (HEX1) gene during Candida albicans morphogenesis.</title>
        <authorList>
            <person name="Niimi M."/>
            <person name="Niimi K."/>
            <person name="Cannon R.D."/>
        </authorList>
    </citation>
    <scope>NUCLEOTIDE SEQUENCE [GENOMIC DNA]</scope>
    <source>
        <strain>ATCC 10261 / CBS 2718 / NBRC 1061 / FMJ 1011</strain>
    </source>
</reference>
<reference key="2">
    <citation type="journal article" date="1989" name="Nucleic Acids Res.">
        <title>Nucleotide sequence of the Candida albicans aspartyl proteinase gene.</title>
        <authorList>
            <person name="Lott T.J."/>
            <person name="Boiron P."/>
            <person name="Page L.S."/>
            <person name="Benson J."/>
            <person name="Reiss E."/>
        </authorList>
    </citation>
    <scope>NUCLEOTIDE SEQUENCE [GENOMIC DNA] OF 39-419</scope>
    <source>
        <strain>ATCC 2091 / CBS 2730 / DSM 1665 / CIP 1180.79 / NBRC 1393 / 132</strain>
    </source>
</reference>
<evidence type="ECO:0000250" key="1"/>
<evidence type="ECO:0000255" key="2"/>
<evidence type="ECO:0000255" key="3">
    <source>
        <dbReference type="PROSITE-ProRule" id="PRU01103"/>
    </source>
</evidence>
<evidence type="ECO:0000255" key="4">
    <source>
        <dbReference type="PROSITE-ProRule" id="PRU10094"/>
    </source>
</evidence>
<evidence type="ECO:0000305" key="5"/>
<sequence length="419" mass="45421">MQLSLSALTTVALALTSSLVDAKAHSIKLSKLSNEETLDASNFQEYTNSLANKYLNLFNTAHGNPSNFGLQHVLTNQEAEVPFVTPKKGGKYDAPLTNYLNAQYFTEIQIGTPGQPFKVILDTGSSNLWVPSQDCTSLACFLHAKYDHDASSTYKVNGSEFSIQYGSGSMEGYISQDVLTIGDLVIPGQDFAEATSEPGLAFAFGKFDGILGLAYDTISVNHIVPPIYNAINQGLLEKPQFGFYLGSTDKDENDGGLATFGGYDASLFQGKITWLPIRRKAYWEVSFEGIGLGDEYAELHKTGAAIDTGTSLITLPSSLAEIINAKIGATKSWSGQYQVDCAKRDSLPDLTLTFAGYNFTLTPYDYILEVSGSCISVFTPMDFPQPIGDLAIVGDAFLRKYYSIYDLDKNAVGLAPTKV</sequence>
<gene>
    <name type="primary">APR1</name>
    <name type="synonym">PRA</name>
    <name type="synonym">PRA1</name>
</gene>
<dbReference type="EC" id="3.4.23.-"/>
<dbReference type="EMBL" id="U36754">
    <property type="protein sequence ID" value="AAA79879.1"/>
    <property type="molecule type" value="Genomic_DNA"/>
</dbReference>
<dbReference type="EMBL" id="X13669">
    <property type="protein sequence ID" value="CAA31962.1"/>
    <property type="molecule type" value="Genomic_DNA"/>
</dbReference>
<dbReference type="PIR" id="S03433">
    <property type="entry name" value="S03433"/>
</dbReference>
<dbReference type="SMR" id="P10977"/>
<dbReference type="MEROPS" id="A01.018"/>
<dbReference type="GlyCosmos" id="P10977">
    <property type="glycosylation" value="2 sites, No reported glycans"/>
</dbReference>
<dbReference type="VEuPathDB" id="FungiDB:C2_07400C_A"/>
<dbReference type="VEuPathDB" id="FungiDB:CAWG_05836"/>
<dbReference type="GO" id="GO:0005576">
    <property type="term" value="C:extracellular region"/>
    <property type="evidence" value="ECO:0007669"/>
    <property type="project" value="UniProtKB-ARBA"/>
</dbReference>
<dbReference type="GO" id="GO:0000324">
    <property type="term" value="C:fungal-type vacuole"/>
    <property type="evidence" value="ECO:0007669"/>
    <property type="project" value="EnsemblFungi"/>
</dbReference>
<dbReference type="GO" id="GO:0032991">
    <property type="term" value="C:protein-containing complex"/>
    <property type="evidence" value="ECO:0007669"/>
    <property type="project" value="EnsemblFungi"/>
</dbReference>
<dbReference type="GO" id="GO:0004190">
    <property type="term" value="F:aspartic-type endopeptidase activity"/>
    <property type="evidence" value="ECO:0007669"/>
    <property type="project" value="UniProtKB-KW"/>
</dbReference>
<dbReference type="GO" id="GO:0097718">
    <property type="term" value="F:disordered domain specific binding"/>
    <property type="evidence" value="ECO:0007669"/>
    <property type="project" value="EnsemblFungi"/>
</dbReference>
<dbReference type="GO" id="GO:0070492">
    <property type="term" value="F:oligosaccharide binding"/>
    <property type="evidence" value="ECO:0007669"/>
    <property type="project" value="EnsemblFungi"/>
</dbReference>
<dbReference type="GO" id="GO:0032258">
    <property type="term" value="P:cytoplasm to vacuole targeting by the Cvt pathway"/>
    <property type="evidence" value="ECO:0007669"/>
    <property type="project" value="EnsemblFungi"/>
</dbReference>
<dbReference type="GO" id="GO:0016237">
    <property type="term" value="P:microautophagy"/>
    <property type="evidence" value="ECO:0007669"/>
    <property type="project" value="EnsemblFungi"/>
</dbReference>
<dbReference type="GO" id="GO:0000425">
    <property type="term" value="P:pexophagy"/>
    <property type="evidence" value="ECO:0007669"/>
    <property type="project" value="EnsemblFungi"/>
</dbReference>
<dbReference type="GO" id="GO:0051603">
    <property type="term" value="P:proteolysis involved in protein catabolic process"/>
    <property type="evidence" value="ECO:0007669"/>
    <property type="project" value="EnsemblFungi"/>
</dbReference>
<dbReference type="CDD" id="cd05488">
    <property type="entry name" value="Proteinase_A_fungi"/>
    <property type="match status" value="1"/>
</dbReference>
<dbReference type="FunFam" id="2.40.70.10:FF:000036">
    <property type="entry name" value="Vacuolar aspartic protease"/>
    <property type="match status" value="1"/>
</dbReference>
<dbReference type="FunFam" id="2.40.70.10:FF:000002">
    <property type="entry name" value="Vacuolar aspartic proteinase"/>
    <property type="match status" value="1"/>
</dbReference>
<dbReference type="Gene3D" id="2.40.70.10">
    <property type="entry name" value="Acid Proteases"/>
    <property type="match status" value="2"/>
</dbReference>
<dbReference type="InterPro" id="IPR001461">
    <property type="entry name" value="Aspartic_peptidase_A1"/>
</dbReference>
<dbReference type="InterPro" id="IPR001969">
    <property type="entry name" value="Aspartic_peptidase_AS"/>
</dbReference>
<dbReference type="InterPro" id="IPR033121">
    <property type="entry name" value="PEPTIDASE_A1"/>
</dbReference>
<dbReference type="InterPro" id="IPR021109">
    <property type="entry name" value="Peptidase_aspartic_dom_sf"/>
</dbReference>
<dbReference type="InterPro" id="IPR033819">
    <property type="entry name" value="Saccharopepsin"/>
</dbReference>
<dbReference type="PANTHER" id="PTHR47966">
    <property type="entry name" value="BETA-SITE APP-CLEAVING ENZYME, ISOFORM A-RELATED"/>
    <property type="match status" value="1"/>
</dbReference>
<dbReference type="PANTHER" id="PTHR47966:SF51">
    <property type="entry name" value="BETA-SITE APP-CLEAVING ENZYME, ISOFORM A-RELATED"/>
    <property type="match status" value="1"/>
</dbReference>
<dbReference type="Pfam" id="PF00026">
    <property type="entry name" value="Asp"/>
    <property type="match status" value="1"/>
</dbReference>
<dbReference type="PRINTS" id="PR00792">
    <property type="entry name" value="PEPSIN"/>
</dbReference>
<dbReference type="SUPFAM" id="SSF50630">
    <property type="entry name" value="Acid proteases"/>
    <property type="match status" value="1"/>
</dbReference>
<dbReference type="PROSITE" id="PS00141">
    <property type="entry name" value="ASP_PROTEASE"/>
    <property type="match status" value="2"/>
</dbReference>
<dbReference type="PROSITE" id="PS51767">
    <property type="entry name" value="PEPTIDASE_A1"/>
    <property type="match status" value="1"/>
</dbReference>
<protein>
    <recommendedName>
        <fullName>Vacuolar aspartic protease</fullName>
        <ecNumber>3.4.23.-</ecNumber>
    </recommendedName>
    <alternativeName>
        <fullName>ACP</fullName>
    </alternativeName>
    <alternativeName>
        <fullName>Aspartate protease</fullName>
    </alternativeName>
</protein>